<proteinExistence type="inferred from homology"/>
<reference key="1">
    <citation type="journal article" date="2007" name="Proc. Natl. Acad. Sci. U.S.A.">
        <title>Genome plasticity of BCG and impact on vaccine efficacy.</title>
        <authorList>
            <person name="Brosch R."/>
            <person name="Gordon S.V."/>
            <person name="Garnier T."/>
            <person name="Eiglmeier K."/>
            <person name="Frigui W."/>
            <person name="Valenti P."/>
            <person name="Dos Santos S."/>
            <person name="Duthoy S."/>
            <person name="Lacroix C."/>
            <person name="Garcia-Pelayo C."/>
            <person name="Inwald J.K."/>
            <person name="Golby P."/>
            <person name="Garcia J.N."/>
            <person name="Hewinson R.G."/>
            <person name="Behr M.A."/>
            <person name="Quail M.A."/>
            <person name="Churcher C."/>
            <person name="Barrell B.G."/>
            <person name="Parkhill J."/>
            <person name="Cole S.T."/>
        </authorList>
    </citation>
    <scope>NUCLEOTIDE SEQUENCE [LARGE SCALE GENOMIC DNA]</scope>
    <source>
        <strain>BCG / Pasteur 1173P2</strain>
    </source>
</reference>
<name>RL18_MYCBP</name>
<organism>
    <name type="scientific">Mycobacterium bovis (strain BCG / Pasteur 1173P2)</name>
    <dbReference type="NCBI Taxonomy" id="410289"/>
    <lineage>
        <taxon>Bacteria</taxon>
        <taxon>Bacillati</taxon>
        <taxon>Actinomycetota</taxon>
        <taxon>Actinomycetes</taxon>
        <taxon>Mycobacteriales</taxon>
        <taxon>Mycobacteriaceae</taxon>
        <taxon>Mycobacterium</taxon>
        <taxon>Mycobacterium tuberculosis complex</taxon>
    </lineage>
</organism>
<sequence length="122" mass="13184">MAQSVSATRRISRLRRHTRLRKKLSGTAERPRLVVHRSARHIHVQLVNDLNGTTVAAASSIEADVRGVPGDKKARSVRVGQLIAERAKAAGIDTVVFDRGGYTYGGRIAALADAARENGLSF</sequence>
<comment type="function">
    <text evidence="1">This is one of the proteins that bind and probably mediate the attachment of the 5S RNA into the large ribosomal subunit, where it forms part of the central protuberance.</text>
</comment>
<comment type="subunit">
    <text evidence="1">Part of the 50S ribosomal subunit; part of the 5S rRNA/L5/L18/L25 subcomplex. Contacts the 5S and 23S rRNAs.</text>
</comment>
<comment type="similarity">
    <text evidence="1">Belongs to the universal ribosomal protein uL18 family.</text>
</comment>
<dbReference type="EMBL" id="AM408590">
    <property type="protein sequence ID" value="CAL70756.1"/>
    <property type="molecule type" value="Genomic_DNA"/>
</dbReference>
<dbReference type="RefSeq" id="WP_003403677.1">
    <property type="nucleotide sequence ID" value="NC_008769.1"/>
</dbReference>
<dbReference type="SMR" id="A1KGK1"/>
<dbReference type="GeneID" id="45424685"/>
<dbReference type="KEGG" id="mbb:BCG_0770"/>
<dbReference type="HOGENOM" id="CLU_098841_0_1_11"/>
<dbReference type="Proteomes" id="UP000001472">
    <property type="component" value="Chromosome"/>
</dbReference>
<dbReference type="GO" id="GO:0022625">
    <property type="term" value="C:cytosolic large ribosomal subunit"/>
    <property type="evidence" value="ECO:0007669"/>
    <property type="project" value="TreeGrafter"/>
</dbReference>
<dbReference type="GO" id="GO:0008097">
    <property type="term" value="F:5S rRNA binding"/>
    <property type="evidence" value="ECO:0007669"/>
    <property type="project" value="TreeGrafter"/>
</dbReference>
<dbReference type="GO" id="GO:0003735">
    <property type="term" value="F:structural constituent of ribosome"/>
    <property type="evidence" value="ECO:0007669"/>
    <property type="project" value="InterPro"/>
</dbReference>
<dbReference type="GO" id="GO:0006412">
    <property type="term" value="P:translation"/>
    <property type="evidence" value="ECO:0007669"/>
    <property type="project" value="UniProtKB-UniRule"/>
</dbReference>
<dbReference type="CDD" id="cd00432">
    <property type="entry name" value="Ribosomal_L18_L5e"/>
    <property type="match status" value="1"/>
</dbReference>
<dbReference type="FunFam" id="3.30.420.100:FF:000001">
    <property type="entry name" value="50S ribosomal protein L18"/>
    <property type="match status" value="1"/>
</dbReference>
<dbReference type="Gene3D" id="3.30.420.100">
    <property type="match status" value="1"/>
</dbReference>
<dbReference type="HAMAP" id="MF_01337_B">
    <property type="entry name" value="Ribosomal_uL18_B"/>
    <property type="match status" value="1"/>
</dbReference>
<dbReference type="InterPro" id="IPR004389">
    <property type="entry name" value="Ribosomal_uL18_bac-type"/>
</dbReference>
<dbReference type="InterPro" id="IPR005484">
    <property type="entry name" value="Ribosomal_uL18_bac/euk"/>
</dbReference>
<dbReference type="NCBIfam" id="TIGR00060">
    <property type="entry name" value="L18_bact"/>
    <property type="match status" value="1"/>
</dbReference>
<dbReference type="PANTHER" id="PTHR12899">
    <property type="entry name" value="39S RIBOSOMAL PROTEIN L18, MITOCHONDRIAL"/>
    <property type="match status" value="1"/>
</dbReference>
<dbReference type="PANTHER" id="PTHR12899:SF3">
    <property type="entry name" value="LARGE RIBOSOMAL SUBUNIT PROTEIN UL18M"/>
    <property type="match status" value="1"/>
</dbReference>
<dbReference type="Pfam" id="PF00861">
    <property type="entry name" value="Ribosomal_L18p"/>
    <property type="match status" value="1"/>
</dbReference>
<dbReference type="SUPFAM" id="SSF53137">
    <property type="entry name" value="Translational machinery components"/>
    <property type="match status" value="1"/>
</dbReference>
<keyword id="KW-0687">Ribonucleoprotein</keyword>
<keyword id="KW-0689">Ribosomal protein</keyword>
<keyword id="KW-0694">RNA-binding</keyword>
<keyword id="KW-0699">rRNA-binding</keyword>
<evidence type="ECO:0000255" key="1">
    <source>
        <dbReference type="HAMAP-Rule" id="MF_01337"/>
    </source>
</evidence>
<evidence type="ECO:0000305" key="2"/>
<accession>A1KGK1</accession>
<feature type="chain" id="PRO_1000053065" description="Large ribosomal subunit protein uL18">
    <location>
        <begin position="1"/>
        <end position="122"/>
    </location>
</feature>
<protein>
    <recommendedName>
        <fullName evidence="1">Large ribosomal subunit protein uL18</fullName>
    </recommendedName>
    <alternativeName>
        <fullName evidence="2">50S ribosomal protein L18</fullName>
    </alternativeName>
</protein>
<gene>
    <name evidence="1" type="primary">rplR</name>
    <name type="ordered locus">BCG_0770</name>
</gene>